<evidence type="ECO:0000250" key="1">
    <source>
        <dbReference type="UniProtKB" id="A0A0A7HIX1"/>
    </source>
</evidence>
<evidence type="ECO:0000269" key="2">
    <source>
    </source>
</evidence>
<evidence type="ECO:0000305" key="3"/>
<accession>E6LHV6</accession>
<protein>
    <recommendedName>
        <fullName>CRISPR system Cms protein Csm2</fullName>
    </recommendedName>
    <alternativeName>
        <fullName>CRISPR type III A-associated protein Csm2</fullName>
    </alternativeName>
</protein>
<sequence length="140" mass="16496">MELAKTKTGEMIDLNFARKVVEENKRVKDNRGRQEIVLFNGLTTSKLRNLLELINHVYTKVYNSDDTTLSEDVRDELEYLKVKFAYESGREPAVRTFIEKTYVDKLVDVVLKKNTKKIFLDYCKYFEALVAYAKFYRMGD</sequence>
<name>CSM2_ENTI1</name>
<dbReference type="EMBL" id="AEPV01000074">
    <property type="protein sequence ID" value="EFU73216.1"/>
    <property type="molecule type" value="Genomic_DNA"/>
</dbReference>
<dbReference type="RefSeq" id="WP_007208957.1">
    <property type="nucleotide sequence ID" value="NZ_GL622241.1"/>
</dbReference>
<dbReference type="PDB" id="9G9A">
    <property type="method" value="EM"/>
    <property type="resolution" value="2.83 A"/>
    <property type="chains" value="B/C=1-140"/>
</dbReference>
<dbReference type="PDB" id="9G9B">
    <property type="method" value="EM"/>
    <property type="resolution" value="3.07 A"/>
    <property type="chains" value="B/C/J=1-140"/>
</dbReference>
<dbReference type="PDB" id="9G9C">
    <property type="method" value="EM"/>
    <property type="resolution" value="2.72 A"/>
    <property type="chains" value="B/C=1-140"/>
</dbReference>
<dbReference type="PDB" id="9G9D">
    <property type="method" value="EM"/>
    <property type="resolution" value="2.90 A"/>
    <property type="chains" value="B/C/J=1-140"/>
</dbReference>
<dbReference type="PDB" id="9G9E">
    <property type="method" value="EM"/>
    <property type="resolution" value="2.87 A"/>
    <property type="chains" value="B/C=1-140"/>
</dbReference>
<dbReference type="PDB" id="9G9F">
    <property type="method" value="EM"/>
    <property type="resolution" value="2.93 A"/>
    <property type="chains" value="B/C=1-140"/>
</dbReference>
<dbReference type="PDB" id="9G9G">
    <property type="method" value="EM"/>
    <property type="resolution" value="3.38 A"/>
    <property type="chains" value="B/C/J=1-140"/>
</dbReference>
<dbReference type="PDB" id="9G9H">
    <property type="method" value="EM"/>
    <property type="resolution" value="2.99 A"/>
    <property type="chains" value="B/C=1-140"/>
</dbReference>
<dbReference type="PDB" id="9G9I">
    <property type="method" value="EM"/>
    <property type="resolution" value="3.31 A"/>
    <property type="chains" value="B/C=1-140"/>
</dbReference>
<dbReference type="PDB" id="9G9J">
    <property type="method" value="EM"/>
    <property type="resolution" value="3.05 A"/>
    <property type="chains" value="B/C=1-140"/>
</dbReference>
<dbReference type="PDB" id="9G9K">
    <property type="method" value="EM"/>
    <property type="resolution" value="3.34 A"/>
    <property type="chains" value="B/C/J=1-140"/>
</dbReference>
<dbReference type="PDBsum" id="9G9A"/>
<dbReference type="PDBsum" id="9G9B"/>
<dbReference type="PDBsum" id="9G9C"/>
<dbReference type="PDBsum" id="9G9D"/>
<dbReference type="PDBsum" id="9G9E"/>
<dbReference type="PDBsum" id="9G9F"/>
<dbReference type="PDBsum" id="9G9G"/>
<dbReference type="PDBsum" id="9G9H"/>
<dbReference type="PDBsum" id="9G9I"/>
<dbReference type="PDBsum" id="9G9J"/>
<dbReference type="PDBsum" id="9G9K"/>
<dbReference type="EMDB" id="EMD-51145"/>
<dbReference type="EMDB" id="EMD-51146"/>
<dbReference type="EMDB" id="EMD-51147"/>
<dbReference type="EMDB" id="EMD-51148"/>
<dbReference type="EMDB" id="EMD-51149"/>
<dbReference type="EMDB" id="EMD-51150"/>
<dbReference type="EMDB" id="EMD-51151"/>
<dbReference type="EMDB" id="EMD-51152"/>
<dbReference type="EMDB" id="EMD-51153"/>
<dbReference type="EMDB" id="EMD-51154"/>
<dbReference type="EMDB" id="EMD-51155"/>
<dbReference type="SMR" id="E6LHV6"/>
<dbReference type="STRING" id="888064.HMPREF9088_1946"/>
<dbReference type="PATRIC" id="fig|888064.11.peg.2084"/>
<dbReference type="eggNOG" id="COG1421">
    <property type="taxonomic scope" value="Bacteria"/>
</dbReference>
<dbReference type="HOGENOM" id="CLU_131491_1_0_9"/>
<dbReference type="OrthoDB" id="1862673at2"/>
<dbReference type="Proteomes" id="UP000010296">
    <property type="component" value="Unassembled WGS sequence"/>
</dbReference>
<dbReference type="GO" id="GO:0003723">
    <property type="term" value="F:RNA binding"/>
    <property type="evidence" value="ECO:0007669"/>
    <property type="project" value="UniProtKB-KW"/>
</dbReference>
<dbReference type="GO" id="GO:0051607">
    <property type="term" value="P:defense response to virus"/>
    <property type="evidence" value="ECO:0007669"/>
    <property type="project" value="UniProtKB-KW"/>
</dbReference>
<dbReference type="CDD" id="cd09647">
    <property type="entry name" value="Csm2_III-A"/>
    <property type="match status" value="1"/>
</dbReference>
<dbReference type="InterPro" id="IPR010149">
    <property type="entry name" value="CRISPR-assoc_prot_Csm2_III-A"/>
</dbReference>
<dbReference type="NCBIfam" id="TIGR01870">
    <property type="entry name" value="cas_TM1810_Csm2"/>
    <property type="match status" value="1"/>
</dbReference>
<dbReference type="Pfam" id="PF03750">
    <property type="entry name" value="Csm2_III-A"/>
    <property type="match status" value="1"/>
</dbReference>
<keyword id="KW-0002">3D-structure</keyword>
<keyword id="KW-0051">Antiviral defense</keyword>
<keyword id="KW-1185">Reference proteome</keyword>
<keyword id="KW-0694">RNA-binding</keyword>
<gene>
    <name type="primary">csm2</name>
    <name type="ORF">HMPREF9088_1946</name>
</gene>
<feature type="chain" id="PRO_0000446116" description="CRISPR system Cms protein Csm2">
    <location>
        <begin position="1"/>
        <end position="140"/>
    </location>
</feature>
<comment type="function">
    <text evidence="2">CRISPR (clustered regularly interspaced short palindromic repeat) is an adaptive immune system that provides protection against mobile genetic elements (viruses, transposable elements and conjugative plasmids). CRISPR clusters contain spacers, sequences complementary to antecedent mobile elements, and target invading nucleic acids. CRISPR clusters are transcribed and processed into CRISPR RNA (crRNA). The type III-A Csm effector complex binds crRNA and acts as a crRNA-guided RNase, DNase and cyclic oligoadenylate synthase; binding of target RNA cognate to the crRNA is required for all activities. In a heterologous host the appropriately targeted Csm effector complex prevents growth of dsDNA phage phiNM1-gamma6.</text>
</comment>
<comment type="function">
    <text evidence="1">This subunit may be involved in monitoring complementarity of crRNA and target RNA.</text>
</comment>
<comment type="subunit">
    <text evidence="2">Part of the Csm effector complex that includes Cas10, Csm2, Csm3, Csm4 and Csm5.</text>
</comment>
<comment type="miscellaneous">
    <text evidence="2">Encoded in a type III-A CRISPR locus.</text>
</comment>
<comment type="similarity">
    <text evidence="3">Belongs to the CRISPR-associated Csm2 family.</text>
</comment>
<reference key="1">
    <citation type="submission" date="2010-12" db="EMBL/GenBank/DDBJ databases">
        <authorList>
            <person name="Muzny D."/>
            <person name="Qin X."/>
            <person name="Deng J."/>
            <person name="Jiang H."/>
            <person name="Liu Y."/>
            <person name="Qu J."/>
            <person name="Song X.-Z."/>
            <person name="Zhang L."/>
            <person name="Thornton R."/>
            <person name="Coyle M."/>
            <person name="Francisco L."/>
            <person name="Jackson L."/>
            <person name="Javaid M."/>
            <person name="Korchina V."/>
            <person name="Kovar C."/>
            <person name="Mata R."/>
            <person name="Mathew T."/>
            <person name="Ngo R."/>
            <person name="Nguyen L."/>
            <person name="Nguyen N."/>
            <person name="Okwuonu G."/>
            <person name="Ongeri F."/>
            <person name="Pham C."/>
            <person name="Simmons D."/>
            <person name="Wilczek-Boney K."/>
            <person name="Hale W."/>
            <person name="Jakkamsetti A."/>
            <person name="Pham P."/>
            <person name="Ruth R."/>
            <person name="San Lucas F."/>
            <person name="Warren J."/>
            <person name="Zhang J."/>
            <person name="Zhao Z."/>
            <person name="Zhou C."/>
            <person name="Zhu D."/>
            <person name="Lee S."/>
            <person name="Bess C."/>
            <person name="Blankenburg K."/>
            <person name="Forbes L."/>
            <person name="Fu Q."/>
            <person name="Gubbala S."/>
            <person name="Hirani K."/>
            <person name="Jayaseelan J.C."/>
            <person name="Lara F."/>
            <person name="Munidasa M."/>
            <person name="Palculict T."/>
            <person name="Patil S."/>
            <person name="Pu L.-L."/>
            <person name="Saada N."/>
            <person name="Tang L."/>
            <person name="Weissenberger G."/>
            <person name="Zhu Y."/>
            <person name="Hemphill L."/>
            <person name="Shang Y."/>
            <person name="Youmans B."/>
            <person name="Ayvaz T."/>
            <person name="Ross M."/>
            <person name="Santibanez J."/>
            <person name="Aqrawi P."/>
            <person name="Gross S."/>
            <person name="Joshi V."/>
            <person name="Fowler G."/>
            <person name="Nazareth L."/>
            <person name="Reid J."/>
            <person name="Worley K."/>
            <person name="Petrosino J."/>
            <person name="Highlander S."/>
            <person name="Gibbs R."/>
        </authorList>
    </citation>
    <scope>NUCLEOTIDE SEQUENCE [LARGE SCALE GENOMIC DNA]</scope>
    <source>
        <strain>DSM 15952 / CCUG 50447 / LMG 22039 / TP 1.5</strain>
    </source>
</reference>
<reference key="2">
    <citation type="journal article" date="2017" name="Nature">
        <title>Type III CRISPR-Cas systems produce cyclic oligoadenylate second messengers.</title>
        <authorList>
            <person name="Niewoehner O."/>
            <person name="Garcia-Doval C."/>
            <person name="Rostoel J.T."/>
            <person name="Berk C."/>
            <person name="Schwede F."/>
            <person name="Bigler L."/>
            <person name="Hall J."/>
            <person name="Marraffini L.A."/>
            <person name="Jinek M."/>
        </authorList>
    </citation>
    <scope>FUNCTION IN PHAGE RESISTANCE</scope>
    <scope>SUBUNIT</scope>
    <source>
        <strain>DSM 15952 / CCUG 50447 / LMG 22039 / TP 1.5</strain>
    </source>
</reference>
<proteinExistence type="evidence at protein level"/>
<organism>
    <name type="scientific">Enterococcus italicus (strain DSM 15952 / CCUG 50447 / LMG 22039 / TP 1.5)</name>
    <dbReference type="NCBI Taxonomy" id="888064"/>
    <lineage>
        <taxon>Bacteria</taxon>
        <taxon>Bacillati</taxon>
        <taxon>Bacillota</taxon>
        <taxon>Bacilli</taxon>
        <taxon>Lactobacillales</taxon>
        <taxon>Enterococcaceae</taxon>
        <taxon>Enterococcus</taxon>
    </lineage>
</organism>